<keyword id="KW-0067">ATP-binding</keyword>
<keyword id="KW-0963">Cytoplasm</keyword>
<keyword id="KW-1015">Disulfide bond</keyword>
<keyword id="KW-0418">Kinase</keyword>
<keyword id="KW-0547">Nucleotide-binding</keyword>
<keyword id="KW-0597">Phosphoprotein</keyword>
<keyword id="KW-0652">Protein synthesis inhibitor</keyword>
<keyword id="KW-1185">Reference proteome</keyword>
<keyword id="KW-0677">Repeat</keyword>
<keyword id="KW-0723">Serine/threonine-protein kinase</keyword>
<keyword id="KW-0808">Transferase</keyword>
<keyword id="KW-0832">Ubl conjugation</keyword>
<sequence length="620" mass="69586">MLGGGSVDGERDTDDDAAGAVAAPPAIDFPAEVSDPKYDESDVPAELQVFKEPLQQPTFPFLVANQLLLVSLLEHLSHVHEPNPLHSKQVFKLLCQTFIKMGLLSSFTCSDEFSSLRLHHNRAITHLMRSAKERVRQDPCQDNSYMQKIRSREIALEAQTSRYLNEFEELAILGKGGYGRVYKVRNKLDGQHYAIKKILIKSATKTDCMKVLREVKVLAGLQHPNIVGYHTAWIEHVHVLQPQDRVPIQLPSLEVLSEHEGDRNQGGVKDNESSSSIIFAELTPEKENPLAESDVKNENNNLVSYRANLVIRSSSESESSIELQEDGLNESPLRPVVKHQLPLGHSSDVEGNFTSTDESSEDNLNLLGQTEARYHLMLHIQMQLCELSLWDWIAERNNRSRECVDEAACPYVMASVATKIFQELVEGVFYIHNMGIVHRDLKPRNIFLHGPDQQVKIGDFGLACADIIQKSADWTNRNGKGTPTHTSRVGTCLYASPEQLEGSEYDAKSDMYSLGVILLELFQPFGTEMERATVLTGVRTGRIPESLSKRCPVQAKYIQLLTGRNAAQRPSALQLLQSELFQTTGNVNLTLQMKIMEQEKEIEELKKQLSLLSQDKGLKR</sequence>
<protein>
    <recommendedName>
        <fullName evidence="9">Eukaryotic translation initiation factor 2-alpha kinase 1</fullName>
        <ecNumber evidence="3">2.7.11.1</ecNumber>
    </recommendedName>
    <alternativeName>
        <fullName>Heme-controlled repressor</fullName>
        <shortName>HCR</shortName>
    </alternativeName>
    <alternativeName>
        <fullName evidence="2">Heme-regulated eukaryotic initiation factor eIF-2-alpha kinase</fullName>
    </alternativeName>
    <alternativeName>
        <fullName evidence="7">Heme-regulated inhibitor</fullName>
    </alternativeName>
    <alternativeName>
        <fullName evidence="8">Hemin-sensitive initiation factor 2-alpha kinase</fullName>
    </alternativeName>
</protein>
<dbReference type="EC" id="2.7.11.1" evidence="3"/>
<dbReference type="EMBL" id="L27707">
    <property type="protein sequence ID" value="AAA18255.1"/>
    <property type="molecule type" value="mRNA"/>
</dbReference>
<dbReference type="EMBL" id="CH474012">
    <property type="protein sequence ID" value="EDL89653.1"/>
    <property type="molecule type" value="Genomic_DNA"/>
</dbReference>
<dbReference type="EMBL" id="BC081838">
    <property type="protein sequence ID" value="AAH81838.1"/>
    <property type="molecule type" value="mRNA"/>
</dbReference>
<dbReference type="PIR" id="A53731">
    <property type="entry name" value="A53731"/>
</dbReference>
<dbReference type="RefSeq" id="NP_037355.2">
    <property type="nucleotide sequence ID" value="NM_013223.2"/>
</dbReference>
<dbReference type="FunCoup" id="Q63185">
    <property type="interactions" value="3218"/>
</dbReference>
<dbReference type="STRING" id="10116.ENSRNOP00000001392"/>
<dbReference type="iPTMnet" id="Q63185"/>
<dbReference type="PhosphoSitePlus" id="Q63185"/>
<dbReference type="PaxDb" id="10116-ENSRNOP00000001392"/>
<dbReference type="Ensembl" id="ENSRNOT00000001392.9">
    <property type="protein sequence ID" value="ENSRNOP00000001392.4"/>
    <property type="gene ID" value="ENSRNOG00000001050.9"/>
</dbReference>
<dbReference type="GeneID" id="27137"/>
<dbReference type="KEGG" id="rno:27137"/>
<dbReference type="AGR" id="RGD:70883"/>
<dbReference type="CTD" id="27102"/>
<dbReference type="RGD" id="70883">
    <property type="gene designation" value="Eif2ak1"/>
</dbReference>
<dbReference type="eggNOG" id="KOG1035">
    <property type="taxonomic scope" value="Eukaryota"/>
</dbReference>
<dbReference type="GeneTree" id="ENSGT00940000157605"/>
<dbReference type="InParanoid" id="Q63185"/>
<dbReference type="PhylomeDB" id="Q63185"/>
<dbReference type="TreeFam" id="TF329383"/>
<dbReference type="Reactome" id="R-RNO-9840373">
    <property type="pathway name" value="Cellular response to mitochondrial stress"/>
</dbReference>
<dbReference type="PRO" id="PR:Q63185"/>
<dbReference type="Proteomes" id="UP000002494">
    <property type="component" value="Chromosome 12"/>
</dbReference>
<dbReference type="Proteomes" id="UP000234681">
    <property type="component" value="Chromosome 12"/>
</dbReference>
<dbReference type="Bgee" id="ENSRNOG00000001050">
    <property type="expression patterns" value="Expressed in spleen and 20 other cell types or tissues"/>
</dbReference>
<dbReference type="ExpressionAtlas" id="Q63185">
    <property type="expression patterns" value="baseline and differential"/>
</dbReference>
<dbReference type="GO" id="GO:0005737">
    <property type="term" value="C:cytoplasm"/>
    <property type="evidence" value="ECO:0000250"/>
    <property type="project" value="UniProtKB"/>
</dbReference>
<dbReference type="GO" id="GO:0005829">
    <property type="term" value="C:cytosol"/>
    <property type="evidence" value="ECO:0000266"/>
    <property type="project" value="RGD"/>
</dbReference>
<dbReference type="GO" id="GO:0005634">
    <property type="term" value="C:nucleus"/>
    <property type="evidence" value="ECO:0000318"/>
    <property type="project" value="GO_Central"/>
</dbReference>
<dbReference type="GO" id="GO:0005524">
    <property type="term" value="F:ATP binding"/>
    <property type="evidence" value="ECO:0007669"/>
    <property type="project" value="UniProtKB-KW"/>
</dbReference>
<dbReference type="GO" id="GO:0004694">
    <property type="term" value="F:eukaryotic translation initiation factor 2alpha kinase activity"/>
    <property type="evidence" value="ECO:0000314"/>
    <property type="project" value="RGD"/>
</dbReference>
<dbReference type="GO" id="GO:0020037">
    <property type="term" value="F:heme binding"/>
    <property type="evidence" value="ECO:0000250"/>
    <property type="project" value="UniProtKB"/>
</dbReference>
<dbReference type="GO" id="GO:0042803">
    <property type="term" value="F:protein homodimerization activity"/>
    <property type="evidence" value="ECO:0000250"/>
    <property type="project" value="UniProtKB"/>
</dbReference>
<dbReference type="GO" id="GO:0004672">
    <property type="term" value="F:protein kinase activity"/>
    <property type="evidence" value="ECO:0000266"/>
    <property type="project" value="RGD"/>
</dbReference>
<dbReference type="GO" id="GO:0106310">
    <property type="term" value="F:protein serine kinase activity"/>
    <property type="evidence" value="ECO:0007669"/>
    <property type="project" value="RHEA"/>
</dbReference>
<dbReference type="GO" id="GO:0002526">
    <property type="term" value="P:acute inflammatory response"/>
    <property type="evidence" value="ECO:0000266"/>
    <property type="project" value="RGD"/>
</dbReference>
<dbReference type="GO" id="GO:0051649">
    <property type="term" value="P:establishment of localization in cell"/>
    <property type="evidence" value="ECO:0000266"/>
    <property type="project" value="RGD"/>
</dbReference>
<dbReference type="GO" id="GO:0140468">
    <property type="term" value="P:HRI-mediated signaling"/>
    <property type="evidence" value="ECO:0000250"/>
    <property type="project" value="UniProtKB"/>
</dbReference>
<dbReference type="GO" id="GO:0140467">
    <property type="term" value="P:integrated stress response signaling"/>
    <property type="evidence" value="ECO:0000250"/>
    <property type="project" value="UniProtKB"/>
</dbReference>
<dbReference type="GO" id="GO:0030225">
    <property type="term" value="P:macrophage differentiation"/>
    <property type="evidence" value="ECO:0000266"/>
    <property type="project" value="RGD"/>
</dbReference>
<dbReference type="GO" id="GO:0060586">
    <property type="term" value="P:multicellular organismal-level iron ion homeostasis"/>
    <property type="evidence" value="ECO:0000266"/>
    <property type="project" value="RGD"/>
</dbReference>
<dbReference type="GO" id="GO:0008285">
    <property type="term" value="P:negative regulation of cell population proliferation"/>
    <property type="evidence" value="ECO:0000250"/>
    <property type="project" value="UniProtKB"/>
</dbReference>
<dbReference type="GO" id="GO:0046986">
    <property type="term" value="P:negative regulation of hemoglobin biosynthetic process"/>
    <property type="evidence" value="ECO:0000250"/>
    <property type="project" value="UniProtKB"/>
</dbReference>
<dbReference type="GO" id="GO:0017148">
    <property type="term" value="P:negative regulation of translation"/>
    <property type="evidence" value="ECO:0007669"/>
    <property type="project" value="UniProtKB-KW"/>
</dbReference>
<dbReference type="GO" id="GO:0006909">
    <property type="term" value="P:phagocytosis"/>
    <property type="evidence" value="ECO:0000266"/>
    <property type="project" value="RGD"/>
</dbReference>
<dbReference type="GO" id="GO:1901526">
    <property type="term" value="P:positive regulation of mitophagy"/>
    <property type="evidence" value="ECO:0000250"/>
    <property type="project" value="UniProtKB"/>
</dbReference>
<dbReference type="GO" id="GO:0046777">
    <property type="term" value="P:protein autophosphorylation"/>
    <property type="evidence" value="ECO:0000250"/>
    <property type="project" value="UniProtKB"/>
</dbReference>
<dbReference type="GO" id="GO:0070585">
    <property type="term" value="P:protein localization to mitochondrion"/>
    <property type="evidence" value="ECO:0000266"/>
    <property type="project" value="RGD"/>
</dbReference>
<dbReference type="GO" id="GO:0046501">
    <property type="term" value="P:protoporphyrinogen IX metabolic process"/>
    <property type="evidence" value="ECO:0000266"/>
    <property type="project" value="RGD"/>
</dbReference>
<dbReference type="GO" id="GO:0046984">
    <property type="term" value="P:regulation of hemoglobin biosynthetic process"/>
    <property type="evidence" value="ECO:0000266"/>
    <property type="project" value="RGD"/>
</dbReference>
<dbReference type="GO" id="GO:0006417">
    <property type="term" value="P:regulation of translation"/>
    <property type="evidence" value="ECO:0000266"/>
    <property type="project" value="RGD"/>
</dbReference>
<dbReference type="GO" id="GO:0006446">
    <property type="term" value="P:regulation of translational initiation"/>
    <property type="evidence" value="ECO:0000318"/>
    <property type="project" value="GO_Central"/>
</dbReference>
<dbReference type="GO" id="GO:1990641">
    <property type="term" value="P:response to iron ion starvation"/>
    <property type="evidence" value="ECO:0000250"/>
    <property type="project" value="UniProtKB"/>
</dbReference>
<dbReference type="CDD" id="cd14049">
    <property type="entry name" value="STKc_EIF2AK1_HRI"/>
    <property type="match status" value="1"/>
</dbReference>
<dbReference type="FunFam" id="3.30.200.20:FF:000380">
    <property type="entry name" value="Eukaryotic translation initiation factor 2 alpha kinase 1"/>
    <property type="match status" value="1"/>
</dbReference>
<dbReference type="FunFam" id="1.10.510.10:FF:000375">
    <property type="entry name" value="Putative eukaryotic translation initiation factor 2-alpha kinase 1"/>
    <property type="match status" value="1"/>
</dbReference>
<dbReference type="Gene3D" id="3.30.200.20">
    <property type="entry name" value="Phosphorylase Kinase, domain 1"/>
    <property type="match status" value="1"/>
</dbReference>
<dbReference type="Gene3D" id="1.10.510.10">
    <property type="entry name" value="Transferase(Phosphotransferase) domain 1"/>
    <property type="match status" value="1"/>
</dbReference>
<dbReference type="InterPro" id="IPR050339">
    <property type="entry name" value="CC_SR_Kinase"/>
</dbReference>
<dbReference type="InterPro" id="IPR054521">
    <property type="entry name" value="HRI2_3H"/>
</dbReference>
<dbReference type="InterPro" id="IPR011009">
    <property type="entry name" value="Kinase-like_dom_sf"/>
</dbReference>
<dbReference type="InterPro" id="IPR000719">
    <property type="entry name" value="Prot_kinase_dom"/>
</dbReference>
<dbReference type="InterPro" id="IPR017441">
    <property type="entry name" value="Protein_kinase_ATP_BS"/>
</dbReference>
<dbReference type="InterPro" id="IPR008271">
    <property type="entry name" value="Ser/Thr_kinase_AS"/>
</dbReference>
<dbReference type="PANTHER" id="PTHR11042:SF160">
    <property type="entry name" value="EUKARYOTIC TRANSLATION INITIATION FACTOR 2-ALPHA KINASE 1"/>
    <property type="match status" value="1"/>
</dbReference>
<dbReference type="PANTHER" id="PTHR11042">
    <property type="entry name" value="EUKARYOTIC TRANSLATION INITIATION FACTOR 2-ALPHA KINASE EIF2-ALPHA KINASE -RELATED"/>
    <property type="match status" value="1"/>
</dbReference>
<dbReference type="Pfam" id="PF22949">
    <property type="entry name" value="HRI2_3H"/>
    <property type="match status" value="1"/>
</dbReference>
<dbReference type="Pfam" id="PF00069">
    <property type="entry name" value="Pkinase"/>
    <property type="match status" value="2"/>
</dbReference>
<dbReference type="SMART" id="SM00220">
    <property type="entry name" value="S_TKc"/>
    <property type="match status" value="1"/>
</dbReference>
<dbReference type="SUPFAM" id="SSF56112">
    <property type="entry name" value="Protein kinase-like (PK-like)"/>
    <property type="match status" value="1"/>
</dbReference>
<dbReference type="PROSITE" id="PS00107">
    <property type="entry name" value="PROTEIN_KINASE_ATP"/>
    <property type="match status" value="1"/>
</dbReference>
<dbReference type="PROSITE" id="PS50011">
    <property type="entry name" value="PROTEIN_KINASE_DOM"/>
    <property type="match status" value="1"/>
</dbReference>
<dbReference type="PROSITE" id="PS00108">
    <property type="entry name" value="PROTEIN_KINASE_ST"/>
    <property type="match status" value="1"/>
</dbReference>
<accession>Q63185</accession>
<accession>Q642C7</accession>
<name>E2AK1_RAT</name>
<feature type="chain" id="PRO_0000085944" description="Eukaryotic translation initiation factor 2-alpha kinase 1">
    <location>
        <begin position="1"/>
        <end position="620"/>
    </location>
</feature>
<feature type="domain" description="Protein kinase" evidence="4">
    <location>
        <begin position="167"/>
        <end position="581"/>
    </location>
</feature>
<feature type="repeat" description="HRM 1">
    <location>
        <begin position="408"/>
        <end position="413"/>
    </location>
</feature>
<feature type="repeat" description="HRM 2">
    <location>
        <begin position="550"/>
        <end position="555"/>
    </location>
</feature>
<feature type="region of interest" description="Disordered" evidence="6">
    <location>
        <begin position="1"/>
        <end position="38"/>
    </location>
</feature>
<feature type="short sequence motif" description="SIFI-degron" evidence="2">
    <location>
        <begin position="85"/>
        <end position="104"/>
    </location>
</feature>
<feature type="compositionally biased region" description="Low complexity" evidence="6">
    <location>
        <begin position="18"/>
        <end position="28"/>
    </location>
</feature>
<feature type="active site" description="Proton acceptor" evidence="4 5">
    <location>
        <position position="440"/>
    </location>
</feature>
<feature type="binding site" evidence="4">
    <location>
        <begin position="173"/>
        <end position="181"/>
    </location>
    <ligand>
        <name>ATP</name>
        <dbReference type="ChEBI" id="CHEBI:30616"/>
    </ligand>
</feature>
<feature type="binding site" evidence="4">
    <location>
        <position position="196"/>
    </location>
    <ligand>
        <name>ATP</name>
        <dbReference type="ChEBI" id="CHEBI:30616"/>
    </ligand>
</feature>
<feature type="site" description="Heme-binding" evidence="1">
    <location>
        <position position="80"/>
    </location>
</feature>
<feature type="modified residue" description="Phosphothreonine" evidence="13">
    <location>
        <position position="283"/>
    </location>
</feature>
<feature type="modified residue" description="Phosphothreonine; by autocatalysis" evidence="3">
    <location>
        <position position="484"/>
    </location>
</feature>
<feature type="modified residue" description="Phosphothreonine; by autocatalysis" evidence="3">
    <location>
        <position position="486"/>
    </location>
</feature>
<feature type="modified residue" description="Phosphothreonine" evidence="3">
    <location>
        <position position="491"/>
    </location>
</feature>
<feature type="sequence conflict" description="In Ref. 1; AAA18255." evidence="9" ref="1">
    <original>N</original>
    <variation>K</variation>
    <location>
        <position position="398"/>
    </location>
</feature>
<feature type="sequence conflict" description="In Ref. 1; AAA18255." evidence="9" ref="1">
    <original>E</original>
    <variation>K</variation>
    <location>
        <position position="402"/>
    </location>
</feature>
<reference key="1">
    <citation type="journal article" date="1994" name="J. Biol. Chem.">
        <title>Cloning and characterization of cDNA encoding rat hemin-sensitive initiation factor-2 alpha (eIF-2 alpha) kinase. Evidence for multitissue expression.</title>
        <authorList>
            <person name="Mellor H."/>
            <person name="Flowers K.M."/>
            <person name="Kimball S.R."/>
            <person name="Jefferson L.S."/>
        </authorList>
    </citation>
    <scope>NUCLEOTIDE SEQUENCE [MRNA]</scope>
    <scope>FUNCTION</scope>
    <scope>CATALYTIC ACTIVITY</scope>
    <source>
        <strain>Sprague-Dawley</strain>
        <tissue>Brain</tissue>
    </source>
</reference>
<reference key="2">
    <citation type="submission" date="2005-07" db="EMBL/GenBank/DDBJ databases">
        <authorList>
            <person name="Mural R.J."/>
            <person name="Adams M.D."/>
            <person name="Myers E.W."/>
            <person name="Smith H.O."/>
            <person name="Venter J.C."/>
        </authorList>
    </citation>
    <scope>NUCLEOTIDE SEQUENCE [LARGE SCALE GENOMIC DNA]</scope>
</reference>
<reference key="3">
    <citation type="journal article" date="2004" name="Genome Res.">
        <title>The status, quality, and expansion of the NIH full-length cDNA project: the Mammalian Gene Collection (MGC).</title>
        <authorList>
            <consortium name="The MGC Project Team"/>
        </authorList>
    </citation>
    <scope>NUCLEOTIDE SEQUENCE [LARGE SCALE MRNA]</scope>
    <source>
        <strain>Brown Norway</strain>
        <tissue>Testis</tissue>
    </source>
</reference>
<reference key="4">
    <citation type="journal article" date="2010" name="Mol. Pharmacol.">
        <title>Hepatic heme-regulated inhibitor (HRI) eukaryotic initiation factor 2alpha kinase: a protagonist of heme-mediated translational control of CYP2B enzymes and a modulator of basal endoplasmic reticulum stress tone.</title>
        <authorList>
            <person name="Acharya P."/>
            <person name="Chen J.J."/>
            <person name="Correia M.A."/>
        </authorList>
    </citation>
    <scope>RETRACTED PAPER</scope>
</reference>
<reference key="5">
    <citation type="journal article" date="2021" name="Mol. Pharmacol.">
        <title>Notice of Retraction: Acharya P, Chen J-J, Correia MA (2010) Hepatic heme-regulated inhibitor (HRI) eukaryotic initiation factor 2alpha kinase: a protagonist of heme-mediated translational control of CYP2B enzymes and a modulator of basal endoplasmic reticulum stress tone. Mol Pharmacol 77(4):575-592; doi:10.1124/mol.109.061259.</title>
        <authorList>
            <person name="Acharya P."/>
            <person name="Chen J.J."/>
            <person name="Correia M.A."/>
        </authorList>
    </citation>
    <scope>RETRACTION NOTICE OF PUBMED:20071449</scope>
</reference>
<reference key="6">
    <citation type="journal article" date="2012" name="Nat. Commun.">
        <title>Quantitative maps of protein phosphorylation sites across 14 different rat organs and tissues.</title>
        <authorList>
            <person name="Lundby A."/>
            <person name="Secher A."/>
            <person name="Lage K."/>
            <person name="Nordsborg N.B."/>
            <person name="Dmytriyev A."/>
            <person name="Lundby C."/>
            <person name="Olsen J.V."/>
        </authorList>
    </citation>
    <scope>PHOSPHORYLATION [LARGE SCALE ANALYSIS] AT THR-283</scope>
    <scope>IDENTIFICATION BY MASS SPECTROMETRY [LARGE SCALE ANALYSIS]</scope>
</reference>
<evidence type="ECO:0000250" key="1">
    <source>
        <dbReference type="UniProtKB" id="P33279"/>
    </source>
</evidence>
<evidence type="ECO:0000250" key="2">
    <source>
        <dbReference type="UniProtKB" id="Q9BQI3"/>
    </source>
</evidence>
<evidence type="ECO:0000250" key="3">
    <source>
        <dbReference type="UniProtKB" id="Q9Z2R9"/>
    </source>
</evidence>
<evidence type="ECO:0000255" key="4">
    <source>
        <dbReference type="PROSITE-ProRule" id="PRU00159"/>
    </source>
</evidence>
<evidence type="ECO:0000255" key="5">
    <source>
        <dbReference type="PROSITE-ProRule" id="PRU10027"/>
    </source>
</evidence>
<evidence type="ECO:0000256" key="6">
    <source>
        <dbReference type="SAM" id="MobiDB-lite"/>
    </source>
</evidence>
<evidence type="ECO:0000303" key="7">
    <source>
    </source>
</evidence>
<evidence type="ECO:0000303" key="8">
    <source>
    </source>
</evidence>
<evidence type="ECO:0000305" key="9"/>
<evidence type="ECO:0000305" key="10">
    <source>
    </source>
</evidence>
<evidence type="ECO:0000305" key="11">
    <source>
    </source>
</evidence>
<evidence type="ECO:0000312" key="12">
    <source>
        <dbReference type="RGD" id="70883"/>
    </source>
</evidence>
<evidence type="ECO:0007744" key="13">
    <source>
    </source>
</evidence>
<organism>
    <name type="scientific">Rattus norvegicus</name>
    <name type="common">Rat</name>
    <dbReference type="NCBI Taxonomy" id="10116"/>
    <lineage>
        <taxon>Eukaryota</taxon>
        <taxon>Metazoa</taxon>
        <taxon>Chordata</taxon>
        <taxon>Craniata</taxon>
        <taxon>Vertebrata</taxon>
        <taxon>Euteleostomi</taxon>
        <taxon>Mammalia</taxon>
        <taxon>Eutheria</taxon>
        <taxon>Euarchontoglires</taxon>
        <taxon>Glires</taxon>
        <taxon>Rodentia</taxon>
        <taxon>Myomorpha</taxon>
        <taxon>Muroidea</taxon>
        <taxon>Muridae</taxon>
        <taxon>Murinae</taxon>
        <taxon>Rattus</taxon>
    </lineage>
</organism>
<proteinExistence type="evidence at protein level"/>
<gene>
    <name evidence="12" type="primary">Eif2ak1</name>
    <name evidence="7" type="synonym">Hri</name>
</gene>
<comment type="function">
    <text evidence="2 3">Metabolic-stress sensing protein kinase that phosphorylates the alpha subunit of eukaryotic translation initiation factor 2 (EIF2S1/eIF-2-alpha) in response to various stress conditions. Key activator of the integrated stress response (ISR) required for adaptation to various stress, such as heme deficiency, oxidative stress, osmotic shock, mitochondrial dysfunction and heat shock. EIF2S1/eIF-2-alpha phosphorylation in response to stress converts EIF2S1/eIF-2-alpha in a global protein synthesis inhibitor, leading to a global attenuation of cap-dependent translation, while concomitantly initiating the preferential translation of ISR-specific mRNAs, such as the transcriptional activator ATF4, and hence allowing ATF4-mediated reprogramming. Acts as a key sensor of heme-deficiency: in normal conditions, binds hemin via a cysteine thiolate and histidine nitrogenous coordination, leading to inhibit the protein kinase activity. This binding occurs with moderate affinity, allowing it to sense the heme concentration within the cell: heme depletion relieves inhibition and stimulates kinase activity, activating the ISR. Thanks to this unique heme-sensing capacity, plays a crucial role to shut off protein synthesis during acute heme-deficient conditions. In red blood cells (RBCs), controls hemoglobin synthesis ensuring a coordinated regulation of the synthesis of its heme and globin moieties. It thereby plays an essential protective role for RBC survival in anemias of iron deficiency. Iron deficiency also triggers activation by full-length DELE1. Also activates the ISR in response to mitochondrial dysfunction: HRI/EIF2AK1 protein kinase activity is activated upon binding to the processed form of DELE1 (S-DELE1), thereby promoting the ATF4-mediated reprogramming (By similarity). Also acts as an activator of mitophagy in response to mitochondrial damage: catalyzes phosphorylation of eIF-2-alpha (EIF2S1) following activation by S-DELE1, thereby promoting mitochondrial localization of EIF2S1, triggering PRKN-independent mitophagy (By similarity).</text>
</comment>
<comment type="catalytic activity">
    <reaction evidence="3">
        <text>L-seryl-[protein] + ATP = O-phospho-L-seryl-[protein] + ADP + H(+)</text>
        <dbReference type="Rhea" id="RHEA:17989"/>
        <dbReference type="Rhea" id="RHEA-COMP:9863"/>
        <dbReference type="Rhea" id="RHEA-COMP:11604"/>
        <dbReference type="ChEBI" id="CHEBI:15378"/>
        <dbReference type="ChEBI" id="CHEBI:29999"/>
        <dbReference type="ChEBI" id="CHEBI:30616"/>
        <dbReference type="ChEBI" id="CHEBI:83421"/>
        <dbReference type="ChEBI" id="CHEBI:456216"/>
        <dbReference type="EC" id="2.7.11.1"/>
    </reaction>
    <physiologicalReaction direction="left-to-right" evidence="3">
        <dbReference type="Rhea" id="RHEA:17990"/>
    </physiologicalReaction>
</comment>
<comment type="catalytic activity">
    <reaction evidence="3">
        <text>L-threonyl-[protein] + ATP = O-phospho-L-threonyl-[protein] + ADP + H(+)</text>
        <dbReference type="Rhea" id="RHEA:46608"/>
        <dbReference type="Rhea" id="RHEA-COMP:11060"/>
        <dbReference type="Rhea" id="RHEA-COMP:11605"/>
        <dbReference type="ChEBI" id="CHEBI:15378"/>
        <dbReference type="ChEBI" id="CHEBI:30013"/>
        <dbReference type="ChEBI" id="CHEBI:30616"/>
        <dbReference type="ChEBI" id="CHEBI:61977"/>
        <dbReference type="ChEBI" id="CHEBI:456216"/>
        <dbReference type="EC" id="2.7.11.1"/>
    </reaction>
    <physiologicalReaction direction="left-to-right" evidence="3">
        <dbReference type="Rhea" id="RHEA:46609"/>
    </physiologicalReaction>
</comment>
<comment type="activity regulation">
    <text evidence="1 2 3">In normal conditions, the protein kinase activity is inhibited; inhibition is relieved by various stress conditions (By similarity). Inhibited by heme: in presence of heme, forms a disulfide-linked inactive homodimer (By similarity). Heme depletion relieves inhibition and stimulates kinase activity by autophosphorylation. Inhibited by the heme metabolites biliverdin and bilirubin. Induced by oxidative stress generated by arsenite treatment. Binding of nitric oxide (NO) to the heme iron in the N-terminal heme-binding domain activates the kinase activity, while binding of carbon monoxide (CO) suppresses kinase activity (By similarity). Protein kinase activity is also activated upon binding to DELE1 in response to various stress, triggering the integrated stress response (ISR): activated by full-length DELE1 in response to iron deficiency, while it is activated by the processed form of DELE1 (S-DELE1) in response to mitochondrial stress (By similarity).</text>
</comment>
<comment type="subunit">
    <text evidence="1 2">Synthesized in an inactive form that binds to the N-terminal domain of CDC37. Has to be associated with a multiprotein complex containing Hsp90, CDC37 and PPP5C for maturation and activation by autophosphorylation. The phosphatase PPP5C modulates this activation (By similarity). Homodimer; homodimerizes in presence of heme, forming a disulfide-linked inactive homodimer (By similarity). Interacts with DELE1; binds both to full-length DELE1 and processed form of DELE1 (S-DELE1) in response to stress, leading to activate its protein kinase activity and trigger the integrated stress response (ISR) (By similarity).</text>
</comment>
<comment type="subcellular location">
    <subcellularLocation>
        <location evidence="3">Cytoplasm</location>
    </subcellularLocation>
</comment>
<comment type="PTM">
    <text evidence="3">Activated by autophosphorylation; phosphorylated predominantly on serine and threonine residues, but also on tyrosine residues. Autophosphorylation at Thr-486 is required for kinase activation. The active autophosphorylated form apparently is largely refractory to cellular heme fluctuations.</text>
</comment>
<comment type="PTM">
    <text evidence="2">Ubiquitinated and degraded by the SIFI complex once the mitochondrial stress has been resolved, thereby providing stress response silencing. Within the SIFI complex, UBR4 initiates ubiquitin chain that are further elongated or branched by KCMF1.</text>
</comment>
<comment type="similarity">
    <text evidence="4">Belongs to the protein kinase superfamily. Ser/Thr protein kinase family. GCN2 subfamily.</text>
</comment>
<comment type="caution">
    <text evidence="10 11">Was reported to be induced by various cytochrome P450 inducers, including phenobarbital, dexamethasone, rifampicin and barbituric acid in its autophosphorylated state, and that carbamazepine has no effect. Was also reported to be expressed predominantly in erythroid cells, and at much lower levels, expressed in hepatocytes (at protein level). However, this paper has been retracted because of improper data manipulation, reuse, and analyses.</text>
</comment>